<organism>
    <name type="scientific">Nocardioides sp. (strain ATCC BAA-499 / JS614)</name>
    <dbReference type="NCBI Taxonomy" id="196162"/>
    <lineage>
        <taxon>Bacteria</taxon>
        <taxon>Bacillati</taxon>
        <taxon>Actinomycetota</taxon>
        <taxon>Actinomycetes</taxon>
        <taxon>Propionibacteriales</taxon>
        <taxon>Nocardioidaceae</taxon>
        <taxon>Nocardioides</taxon>
    </lineage>
</organism>
<keyword id="KW-0067">ATP-binding</keyword>
<keyword id="KW-0143">Chaperone</keyword>
<keyword id="KW-0963">Cytoplasm</keyword>
<keyword id="KW-0413">Isomerase</keyword>
<keyword id="KW-0547">Nucleotide-binding</keyword>
<keyword id="KW-1185">Reference proteome</keyword>
<sequence>MPKILEFDEHARRALERGVDALANAVKVTLGPKGRYVVLDKKWGAPTITNDGVTVAREVELDDPFENLGAQLTKEVATKTNDIAGDGTTTATVLAQAMVHEGLRAVTAGANPMGLKRGMDAAAEAVGDALKEAAREVESREDMASVATISSRDSVIGDLLAEAFDKVGKDGVITVEESNTMGTELEFTEGMQFDKGYISQYFVTDPERMEAVLEDPYILLHQGKISAVAELLPLLEKVIQSGKPLFILAEDVEGEALSTLVVNKIRGTFNAVAVKSPAFGDRRKAMMQDIATLTGGQVVAPEVGLKLDQVGLEVLGQARRVVVTKDDTTIVDGAGDPKDVEGRVNQIKAEVENTDSDWDREKLQERLAKLAGGVCVIKVGAATEVELKEKKHRIEDAVSATRAAIEEGIVAGGGSALVHAVSVLSDDLGLTGDEALGVRVVRKAADEPLRWIAENGGVNGYVVTTKVRELGLGNGFNAATEEYGDLVAQGVLDPVKVTRSALVNATSIAGMLLTTETLVVDKPEEEEPAAAGHGHGHGHGH</sequence>
<accession>A1SMW1</accession>
<reference key="1">
    <citation type="submission" date="2006-12" db="EMBL/GenBank/DDBJ databases">
        <title>Complete sequence of chromosome 1 of Nocardioides sp. JS614.</title>
        <authorList>
            <person name="Copeland A."/>
            <person name="Lucas S."/>
            <person name="Lapidus A."/>
            <person name="Barry K."/>
            <person name="Detter J.C."/>
            <person name="Glavina del Rio T."/>
            <person name="Hammon N."/>
            <person name="Israni S."/>
            <person name="Dalin E."/>
            <person name="Tice H."/>
            <person name="Pitluck S."/>
            <person name="Thompson L.S."/>
            <person name="Brettin T."/>
            <person name="Bruce D."/>
            <person name="Han C."/>
            <person name="Tapia R."/>
            <person name="Schmutz J."/>
            <person name="Larimer F."/>
            <person name="Land M."/>
            <person name="Hauser L."/>
            <person name="Kyrpides N."/>
            <person name="Kim E."/>
            <person name="Mattes T."/>
            <person name="Gossett J."/>
            <person name="Richardson P."/>
        </authorList>
    </citation>
    <scope>NUCLEOTIDE SEQUENCE [LARGE SCALE GENOMIC DNA]</scope>
    <source>
        <strain>ATCC BAA-499 / JS614</strain>
    </source>
</reference>
<name>CH601_NOCSJ</name>
<gene>
    <name evidence="1" type="primary">groEL1</name>
    <name evidence="1" type="synonym">groL1</name>
    <name type="ordered locus">Noca_3646</name>
</gene>
<feature type="chain" id="PRO_0000332032" description="Chaperonin GroEL 1">
    <location>
        <begin position="1"/>
        <end position="541"/>
    </location>
</feature>
<feature type="binding site" evidence="1">
    <location>
        <begin position="29"/>
        <end position="32"/>
    </location>
    <ligand>
        <name>ATP</name>
        <dbReference type="ChEBI" id="CHEBI:30616"/>
    </ligand>
</feature>
<feature type="binding site" evidence="1">
    <location>
        <begin position="86"/>
        <end position="90"/>
    </location>
    <ligand>
        <name>ATP</name>
        <dbReference type="ChEBI" id="CHEBI:30616"/>
    </ligand>
</feature>
<feature type="binding site" evidence="1">
    <location>
        <position position="413"/>
    </location>
    <ligand>
        <name>ATP</name>
        <dbReference type="ChEBI" id="CHEBI:30616"/>
    </ligand>
</feature>
<feature type="binding site" evidence="1">
    <location>
        <begin position="477"/>
        <end position="479"/>
    </location>
    <ligand>
        <name>ATP</name>
        <dbReference type="ChEBI" id="CHEBI:30616"/>
    </ligand>
</feature>
<feature type="binding site" evidence="1">
    <location>
        <position position="493"/>
    </location>
    <ligand>
        <name>ATP</name>
        <dbReference type="ChEBI" id="CHEBI:30616"/>
    </ligand>
</feature>
<proteinExistence type="inferred from homology"/>
<dbReference type="EC" id="5.6.1.7" evidence="1"/>
<dbReference type="EMBL" id="CP000509">
    <property type="protein sequence ID" value="ABL83146.1"/>
    <property type="molecule type" value="Genomic_DNA"/>
</dbReference>
<dbReference type="SMR" id="A1SMW1"/>
<dbReference type="STRING" id="196162.Noca_3646"/>
<dbReference type="KEGG" id="nca:Noca_3646"/>
<dbReference type="eggNOG" id="COG0459">
    <property type="taxonomic scope" value="Bacteria"/>
</dbReference>
<dbReference type="HOGENOM" id="CLU_016503_3_0_11"/>
<dbReference type="OrthoDB" id="9766614at2"/>
<dbReference type="Proteomes" id="UP000000640">
    <property type="component" value="Chromosome"/>
</dbReference>
<dbReference type="GO" id="GO:0005737">
    <property type="term" value="C:cytoplasm"/>
    <property type="evidence" value="ECO:0007669"/>
    <property type="project" value="UniProtKB-SubCell"/>
</dbReference>
<dbReference type="GO" id="GO:0005524">
    <property type="term" value="F:ATP binding"/>
    <property type="evidence" value="ECO:0007669"/>
    <property type="project" value="UniProtKB-UniRule"/>
</dbReference>
<dbReference type="GO" id="GO:0140662">
    <property type="term" value="F:ATP-dependent protein folding chaperone"/>
    <property type="evidence" value="ECO:0007669"/>
    <property type="project" value="InterPro"/>
</dbReference>
<dbReference type="GO" id="GO:0016853">
    <property type="term" value="F:isomerase activity"/>
    <property type="evidence" value="ECO:0007669"/>
    <property type="project" value="UniProtKB-KW"/>
</dbReference>
<dbReference type="GO" id="GO:0051082">
    <property type="term" value="F:unfolded protein binding"/>
    <property type="evidence" value="ECO:0007669"/>
    <property type="project" value="UniProtKB-UniRule"/>
</dbReference>
<dbReference type="GO" id="GO:0042026">
    <property type="term" value="P:protein refolding"/>
    <property type="evidence" value="ECO:0007669"/>
    <property type="project" value="UniProtKB-UniRule"/>
</dbReference>
<dbReference type="CDD" id="cd03344">
    <property type="entry name" value="GroEL"/>
    <property type="match status" value="1"/>
</dbReference>
<dbReference type="FunFam" id="3.50.7.10:FF:000001">
    <property type="entry name" value="60 kDa chaperonin"/>
    <property type="match status" value="1"/>
</dbReference>
<dbReference type="Gene3D" id="3.50.7.10">
    <property type="entry name" value="GroEL"/>
    <property type="match status" value="1"/>
</dbReference>
<dbReference type="Gene3D" id="1.10.560.10">
    <property type="entry name" value="GroEL-like equatorial domain"/>
    <property type="match status" value="1"/>
</dbReference>
<dbReference type="Gene3D" id="3.30.260.10">
    <property type="entry name" value="TCP-1-like chaperonin intermediate domain"/>
    <property type="match status" value="1"/>
</dbReference>
<dbReference type="HAMAP" id="MF_00600">
    <property type="entry name" value="CH60"/>
    <property type="match status" value="1"/>
</dbReference>
<dbReference type="InterPro" id="IPR018370">
    <property type="entry name" value="Chaperonin_Cpn60_CS"/>
</dbReference>
<dbReference type="InterPro" id="IPR001844">
    <property type="entry name" value="Cpn60/GroEL"/>
</dbReference>
<dbReference type="InterPro" id="IPR002423">
    <property type="entry name" value="Cpn60/GroEL/TCP-1"/>
</dbReference>
<dbReference type="InterPro" id="IPR027409">
    <property type="entry name" value="GroEL-like_apical_dom_sf"/>
</dbReference>
<dbReference type="InterPro" id="IPR027413">
    <property type="entry name" value="GROEL-like_equatorial_sf"/>
</dbReference>
<dbReference type="InterPro" id="IPR027410">
    <property type="entry name" value="TCP-1-like_intermed_sf"/>
</dbReference>
<dbReference type="NCBIfam" id="TIGR02348">
    <property type="entry name" value="GroEL"/>
    <property type="match status" value="1"/>
</dbReference>
<dbReference type="NCBIfam" id="NF000592">
    <property type="entry name" value="PRK00013.1"/>
    <property type="match status" value="1"/>
</dbReference>
<dbReference type="NCBIfam" id="NF009487">
    <property type="entry name" value="PRK12849.1"/>
    <property type="match status" value="1"/>
</dbReference>
<dbReference type="NCBIfam" id="NF009488">
    <property type="entry name" value="PRK12850.1"/>
    <property type="match status" value="1"/>
</dbReference>
<dbReference type="NCBIfam" id="NF009489">
    <property type="entry name" value="PRK12851.1"/>
    <property type="match status" value="1"/>
</dbReference>
<dbReference type="PANTHER" id="PTHR45633">
    <property type="entry name" value="60 KDA HEAT SHOCK PROTEIN, MITOCHONDRIAL"/>
    <property type="match status" value="1"/>
</dbReference>
<dbReference type="Pfam" id="PF00118">
    <property type="entry name" value="Cpn60_TCP1"/>
    <property type="match status" value="1"/>
</dbReference>
<dbReference type="PRINTS" id="PR00298">
    <property type="entry name" value="CHAPERONIN60"/>
</dbReference>
<dbReference type="SUPFAM" id="SSF52029">
    <property type="entry name" value="GroEL apical domain-like"/>
    <property type="match status" value="1"/>
</dbReference>
<dbReference type="SUPFAM" id="SSF48592">
    <property type="entry name" value="GroEL equatorial domain-like"/>
    <property type="match status" value="1"/>
</dbReference>
<dbReference type="SUPFAM" id="SSF54849">
    <property type="entry name" value="GroEL-intermediate domain like"/>
    <property type="match status" value="1"/>
</dbReference>
<dbReference type="PROSITE" id="PS00296">
    <property type="entry name" value="CHAPERONINS_CPN60"/>
    <property type="match status" value="1"/>
</dbReference>
<protein>
    <recommendedName>
        <fullName evidence="1">Chaperonin GroEL 1</fullName>
        <ecNumber evidence="1">5.6.1.7</ecNumber>
    </recommendedName>
    <alternativeName>
        <fullName evidence="1">60 kDa chaperonin 1</fullName>
    </alternativeName>
    <alternativeName>
        <fullName evidence="1">Chaperonin-60 1</fullName>
        <shortName evidence="1">Cpn60 1</shortName>
    </alternativeName>
</protein>
<comment type="function">
    <text evidence="1">Together with its co-chaperonin GroES, plays an essential role in assisting protein folding. The GroEL-GroES system forms a nano-cage that allows encapsulation of the non-native substrate proteins and provides a physical environment optimized to promote and accelerate protein folding.</text>
</comment>
<comment type="catalytic activity">
    <reaction evidence="1">
        <text>ATP + H2O + a folded polypeptide = ADP + phosphate + an unfolded polypeptide.</text>
        <dbReference type="EC" id="5.6.1.7"/>
    </reaction>
</comment>
<comment type="subunit">
    <text evidence="1">Forms a cylinder of 14 subunits composed of two heptameric rings stacked back-to-back. Interacts with the co-chaperonin GroES.</text>
</comment>
<comment type="subcellular location">
    <subcellularLocation>
        <location evidence="1">Cytoplasm</location>
    </subcellularLocation>
</comment>
<comment type="similarity">
    <text evidence="1">Belongs to the chaperonin (HSP60) family.</text>
</comment>
<evidence type="ECO:0000255" key="1">
    <source>
        <dbReference type="HAMAP-Rule" id="MF_00600"/>
    </source>
</evidence>